<feature type="chain" id="PRO_0000141316" description="Cobyric acid synthase">
    <location>
        <begin position="1"/>
        <end position="484"/>
    </location>
</feature>
<feature type="domain" description="GATase cobBQ-type" evidence="1">
    <location>
        <begin position="253"/>
        <end position="430"/>
    </location>
</feature>
<feature type="active site" description="Nucleophile" evidence="1">
    <location>
        <position position="334"/>
    </location>
</feature>
<feature type="active site" evidence="1">
    <location>
        <position position="422"/>
    </location>
</feature>
<dbReference type="EMBL" id="AE017283">
    <property type="protein sequence ID" value="AAT82170.1"/>
    <property type="molecule type" value="Genomic_DNA"/>
</dbReference>
<dbReference type="SMR" id="Q6AAP6"/>
<dbReference type="EnsemblBacteria" id="AAT82170">
    <property type="protein sequence ID" value="AAT82170"/>
    <property type="gene ID" value="PPA0419"/>
</dbReference>
<dbReference type="KEGG" id="pac:PPA0419"/>
<dbReference type="eggNOG" id="COG1492">
    <property type="taxonomic scope" value="Bacteria"/>
</dbReference>
<dbReference type="HOGENOM" id="CLU_019250_2_2_11"/>
<dbReference type="UniPathway" id="UPA00148"/>
<dbReference type="Proteomes" id="UP000000603">
    <property type="component" value="Chromosome"/>
</dbReference>
<dbReference type="GO" id="GO:0015420">
    <property type="term" value="F:ABC-type vitamin B12 transporter activity"/>
    <property type="evidence" value="ECO:0007669"/>
    <property type="project" value="UniProtKB-UniRule"/>
</dbReference>
<dbReference type="GO" id="GO:0003824">
    <property type="term" value="F:catalytic activity"/>
    <property type="evidence" value="ECO:0007669"/>
    <property type="project" value="InterPro"/>
</dbReference>
<dbReference type="GO" id="GO:0009236">
    <property type="term" value="P:cobalamin biosynthetic process"/>
    <property type="evidence" value="ECO:0007669"/>
    <property type="project" value="UniProtKB-UniRule"/>
</dbReference>
<dbReference type="CDD" id="cd05389">
    <property type="entry name" value="CobQ_N"/>
    <property type="match status" value="1"/>
</dbReference>
<dbReference type="CDD" id="cd01750">
    <property type="entry name" value="GATase1_CobQ"/>
    <property type="match status" value="1"/>
</dbReference>
<dbReference type="Gene3D" id="3.40.50.880">
    <property type="match status" value="1"/>
</dbReference>
<dbReference type="Gene3D" id="3.40.50.300">
    <property type="entry name" value="P-loop containing nucleotide triphosphate hydrolases"/>
    <property type="match status" value="1"/>
</dbReference>
<dbReference type="HAMAP" id="MF_00028">
    <property type="entry name" value="CobQ"/>
    <property type="match status" value="1"/>
</dbReference>
<dbReference type="InterPro" id="IPR029062">
    <property type="entry name" value="Class_I_gatase-like"/>
</dbReference>
<dbReference type="InterPro" id="IPR002586">
    <property type="entry name" value="CobQ/CobB/MinD/ParA_Nub-bd_dom"/>
</dbReference>
<dbReference type="InterPro" id="IPR033949">
    <property type="entry name" value="CobQ_GATase1"/>
</dbReference>
<dbReference type="InterPro" id="IPR047045">
    <property type="entry name" value="CobQ_N"/>
</dbReference>
<dbReference type="InterPro" id="IPR004459">
    <property type="entry name" value="CobQ_synth"/>
</dbReference>
<dbReference type="InterPro" id="IPR011698">
    <property type="entry name" value="GATase_3"/>
</dbReference>
<dbReference type="InterPro" id="IPR027417">
    <property type="entry name" value="P-loop_NTPase"/>
</dbReference>
<dbReference type="NCBIfam" id="TIGR00313">
    <property type="entry name" value="cobQ"/>
    <property type="match status" value="1"/>
</dbReference>
<dbReference type="NCBIfam" id="NF001989">
    <property type="entry name" value="PRK00784.1"/>
    <property type="match status" value="1"/>
</dbReference>
<dbReference type="PANTHER" id="PTHR21343:SF1">
    <property type="entry name" value="COBYRIC ACID SYNTHASE"/>
    <property type="match status" value="1"/>
</dbReference>
<dbReference type="PANTHER" id="PTHR21343">
    <property type="entry name" value="DETHIOBIOTIN SYNTHETASE"/>
    <property type="match status" value="1"/>
</dbReference>
<dbReference type="Pfam" id="PF01656">
    <property type="entry name" value="CbiA"/>
    <property type="match status" value="1"/>
</dbReference>
<dbReference type="Pfam" id="PF07685">
    <property type="entry name" value="GATase_3"/>
    <property type="match status" value="1"/>
</dbReference>
<dbReference type="SUPFAM" id="SSF52317">
    <property type="entry name" value="Class I glutamine amidotransferase-like"/>
    <property type="match status" value="1"/>
</dbReference>
<dbReference type="SUPFAM" id="SSF52540">
    <property type="entry name" value="P-loop containing nucleoside triphosphate hydrolases"/>
    <property type="match status" value="1"/>
</dbReference>
<dbReference type="PROSITE" id="PS51274">
    <property type="entry name" value="GATASE_COBBQ"/>
    <property type="match status" value="1"/>
</dbReference>
<gene>
    <name evidence="1" type="primary">cobQ</name>
    <name type="ordered locus">PPA0419</name>
</gene>
<organism>
    <name type="scientific">Cutibacterium acnes (strain DSM 16379 / KPA171202)</name>
    <name type="common">Propionibacterium acnes</name>
    <dbReference type="NCBI Taxonomy" id="267747"/>
    <lineage>
        <taxon>Bacteria</taxon>
        <taxon>Bacillati</taxon>
        <taxon>Actinomycetota</taxon>
        <taxon>Actinomycetes</taxon>
        <taxon>Propionibacteriales</taxon>
        <taxon>Propionibacteriaceae</taxon>
        <taxon>Cutibacterium</taxon>
    </lineage>
</organism>
<sequence>MTGILVAGTSSDAGKSLVVTALCRVARRRGVDVVPFKAQNMSNNSMVCADGSEIGRAQYLQATAAGVTPTSAMNPVLLKPGTDRRSFVVLRGKPGGVLEAGEYTTGRRYLAEAAWAAYDELAASHDMVICEGAGSPAEINLRRGDYTNMGLARAKNLPVVLVGDIDRGGVLASLFGTWALLDDDDRALLAGYIVNKFRGDDAILAPGLEEITDRTGMPSFGVLPWVPGVWLDGEDALEVGRWRHEGDAVDPSSLRVAVVRFPRISNATDVDAMAGETGVDVQVTTNPDTCQAADVLVLPGSRSTVSDLEWLRRSGIADVVARRAEQGRTVVGICGGYQMLCRTILDPDGQETTPGSVVEGLGLLPVEVDFAATKTLALSHGTWRGIEVGGYEIHHGVCRSLEDAEAFLDGVHVGPVWGTMWHGAFEHDEFRRTWLADAARHAGSSWRPHSDELGYQARREAMIETLADALEAHVDVDRILHLVR</sequence>
<keyword id="KW-0169">Cobalamin biosynthesis</keyword>
<keyword id="KW-0315">Glutamine amidotransferase</keyword>
<name>COBQ_CUTAK</name>
<reference key="1">
    <citation type="journal article" date="2004" name="Science">
        <title>The complete genome sequence of Propionibacterium acnes, a commensal of human skin.</title>
        <authorList>
            <person name="Brueggemann H."/>
            <person name="Henne A."/>
            <person name="Hoster F."/>
            <person name="Liesegang H."/>
            <person name="Wiezer A."/>
            <person name="Strittmatter A."/>
            <person name="Hujer S."/>
            <person name="Duerre P."/>
            <person name="Gottschalk G."/>
        </authorList>
    </citation>
    <scope>NUCLEOTIDE SEQUENCE [LARGE SCALE GENOMIC DNA]</scope>
    <source>
        <strain>DSM 16379 / KPA171202</strain>
    </source>
</reference>
<evidence type="ECO:0000255" key="1">
    <source>
        <dbReference type="HAMAP-Rule" id="MF_00028"/>
    </source>
</evidence>
<comment type="function">
    <text evidence="1">Catalyzes amidations at positions B, D, E, and G on adenosylcobyrinic A,C-diamide. NH(2) groups are provided by glutamine, and one molecule of ATP is hydrogenolyzed for each amidation.</text>
</comment>
<comment type="pathway">
    <text evidence="1">Cofactor biosynthesis; adenosylcobalamin biosynthesis.</text>
</comment>
<comment type="similarity">
    <text evidence="1">Belongs to the CobB/CobQ family. CobQ subfamily.</text>
</comment>
<protein>
    <recommendedName>
        <fullName evidence="1">Cobyric acid synthase</fullName>
    </recommendedName>
</protein>
<proteinExistence type="inferred from homology"/>
<accession>Q6AAP6</accession>